<gene>
    <name evidence="1" type="primary">recX</name>
    <name type="ordered locus">Glov_3159</name>
</gene>
<organism>
    <name type="scientific">Trichlorobacter lovleyi (strain ATCC BAA-1151 / DSM 17278 / SZ)</name>
    <name type="common">Geobacter lovleyi</name>
    <dbReference type="NCBI Taxonomy" id="398767"/>
    <lineage>
        <taxon>Bacteria</taxon>
        <taxon>Pseudomonadati</taxon>
        <taxon>Thermodesulfobacteriota</taxon>
        <taxon>Desulfuromonadia</taxon>
        <taxon>Geobacterales</taxon>
        <taxon>Geobacteraceae</taxon>
        <taxon>Trichlorobacter</taxon>
    </lineage>
</organism>
<feature type="chain" id="PRO_1000137169" description="Regulatory protein RecX">
    <location>
        <begin position="1"/>
        <end position="154"/>
    </location>
</feature>
<protein>
    <recommendedName>
        <fullName evidence="1">Regulatory protein RecX</fullName>
    </recommendedName>
</protein>
<reference key="1">
    <citation type="submission" date="2008-05" db="EMBL/GenBank/DDBJ databases">
        <title>Complete sequence of chromosome of Geobacter lovleyi SZ.</title>
        <authorList>
            <consortium name="US DOE Joint Genome Institute"/>
            <person name="Lucas S."/>
            <person name="Copeland A."/>
            <person name="Lapidus A."/>
            <person name="Glavina del Rio T."/>
            <person name="Dalin E."/>
            <person name="Tice H."/>
            <person name="Bruce D."/>
            <person name="Goodwin L."/>
            <person name="Pitluck S."/>
            <person name="Chertkov O."/>
            <person name="Meincke L."/>
            <person name="Brettin T."/>
            <person name="Detter J.C."/>
            <person name="Han C."/>
            <person name="Tapia R."/>
            <person name="Kuske C.R."/>
            <person name="Schmutz J."/>
            <person name="Larimer F."/>
            <person name="Land M."/>
            <person name="Hauser L."/>
            <person name="Kyrpides N."/>
            <person name="Mikhailova N."/>
            <person name="Sung Y."/>
            <person name="Fletcher K.E."/>
            <person name="Ritalahti K.M."/>
            <person name="Loeffler F.E."/>
            <person name="Richardson P."/>
        </authorList>
    </citation>
    <scope>NUCLEOTIDE SEQUENCE [LARGE SCALE GENOMIC DNA]</scope>
    <source>
        <strain>ATCC BAA-1151 / DSM 17278 / SZ</strain>
    </source>
</reference>
<dbReference type="EMBL" id="CP001089">
    <property type="protein sequence ID" value="ACD96865.1"/>
    <property type="molecule type" value="Genomic_DNA"/>
</dbReference>
<dbReference type="RefSeq" id="WP_012471189.1">
    <property type="nucleotide sequence ID" value="NC_010814.1"/>
</dbReference>
<dbReference type="SMR" id="B3E9Z0"/>
<dbReference type="STRING" id="398767.Glov_3159"/>
<dbReference type="KEGG" id="glo:Glov_3159"/>
<dbReference type="eggNOG" id="COG2137">
    <property type="taxonomic scope" value="Bacteria"/>
</dbReference>
<dbReference type="HOGENOM" id="CLU_066607_0_1_7"/>
<dbReference type="OrthoDB" id="9813859at2"/>
<dbReference type="Proteomes" id="UP000002420">
    <property type="component" value="Chromosome"/>
</dbReference>
<dbReference type="GO" id="GO:0005737">
    <property type="term" value="C:cytoplasm"/>
    <property type="evidence" value="ECO:0007669"/>
    <property type="project" value="UniProtKB-SubCell"/>
</dbReference>
<dbReference type="GO" id="GO:0006282">
    <property type="term" value="P:regulation of DNA repair"/>
    <property type="evidence" value="ECO:0007669"/>
    <property type="project" value="UniProtKB-UniRule"/>
</dbReference>
<dbReference type="Gene3D" id="1.10.10.10">
    <property type="entry name" value="Winged helix-like DNA-binding domain superfamily/Winged helix DNA-binding domain"/>
    <property type="match status" value="3"/>
</dbReference>
<dbReference type="HAMAP" id="MF_01114">
    <property type="entry name" value="RecX"/>
    <property type="match status" value="1"/>
</dbReference>
<dbReference type="InterPro" id="IPR053926">
    <property type="entry name" value="RecX_HTH_1st"/>
</dbReference>
<dbReference type="InterPro" id="IPR053924">
    <property type="entry name" value="RecX_HTH_2nd"/>
</dbReference>
<dbReference type="InterPro" id="IPR053925">
    <property type="entry name" value="RecX_HTH_3rd"/>
</dbReference>
<dbReference type="InterPro" id="IPR003783">
    <property type="entry name" value="Regulatory_RecX"/>
</dbReference>
<dbReference type="InterPro" id="IPR036388">
    <property type="entry name" value="WH-like_DNA-bd_sf"/>
</dbReference>
<dbReference type="PANTHER" id="PTHR33602">
    <property type="entry name" value="REGULATORY PROTEIN RECX FAMILY PROTEIN"/>
    <property type="match status" value="1"/>
</dbReference>
<dbReference type="PANTHER" id="PTHR33602:SF1">
    <property type="entry name" value="REGULATORY PROTEIN RECX FAMILY PROTEIN"/>
    <property type="match status" value="1"/>
</dbReference>
<dbReference type="Pfam" id="PF21982">
    <property type="entry name" value="RecX_HTH1"/>
    <property type="match status" value="1"/>
</dbReference>
<dbReference type="Pfam" id="PF02631">
    <property type="entry name" value="RecX_HTH2"/>
    <property type="match status" value="1"/>
</dbReference>
<dbReference type="Pfam" id="PF21981">
    <property type="entry name" value="RecX_HTH3"/>
    <property type="match status" value="1"/>
</dbReference>
<accession>B3E9Z0</accession>
<proteinExistence type="inferred from homology"/>
<name>RECX_TRIL1</name>
<comment type="function">
    <text evidence="1">Modulates RecA activity.</text>
</comment>
<comment type="subcellular location">
    <subcellularLocation>
        <location evidence="1">Cytoplasm</location>
    </subcellularLocation>
</comment>
<comment type="similarity">
    <text evidence="1">Belongs to the RecX family.</text>
</comment>
<evidence type="ECO:0000255" key="1">
    <source>
        <dbReference type="HAMAP-Rule" id="MF_01114"/>
    </source>
</evidence>
<keyword id="KW-0963">Cytoplasm</keyword>
<keyword id="KW-1185">Reference proteome</keyword>
<sequence>MTGSNQPSDCYLAALRLLTGRDYTCAALRRKLQQKRFAAEEAQQAVERLIREGYLQDQRYAERLVAAVRQNGSFTGYRLQQELRRRGVPPELIDQVLRESPADGDELERARHLVERRYAGFDPQAADERQLRRVAGFLQRRGYRSDLIRQLFEK</sequence>